<protein>
    <recommendedName>
        <fullName evidence="1">Probable phosphatase Sbal195_1503</fullName>
        <ecNumber evidence="1">3.1.3.-</ecNumber>
    </recommendedName>
</protein>
<name>Y1503_SHEB9</name>
<keyword id="KW-0378">Hydrolase</keyword>
<keyword id="KW-0479">Metal-binding</keyword>
<keyword id="KW-0862">Zinc</keyword>
<feature type="chain" id="PRO_1000087809" description="Probable phosphatase Sbal195_1503">
    <location>
        <begin position="1"/>
        <end position="254"/>
    </location>
</feature>
<feature type="binding site" evidence="1">
    <location>
        <position position="8"/>
    </location>
    <ligand>
        <name>Zn(2+)</name>
        <dbReference type="ChEBI" id="CHEBI:29105"/>
        <label>1</label>
    </ligand>
</feature>
<feature type="binding site" evidence="1">
    <location>
        <position position="10"/>
    </location>
    <ligand>
        <name>Zn(2+)</name>
        <dbReference type="ChEBI" id="CHEBI:29105"/>
        <label>1</label>
    </ligand>
</feature>
<feature type="binding site" evidence="1">
    <location>
        <position position="16"/>
    </location>
    <ligand>
        <name>Zn(2+)</name>
        <dbReference type="ChEBI" id="CHEBI:29105"/>
        <label>2</label>
    </ligand>
</feature>
<feature type="binding site" evidence="1">
    <location>
        <position position="41"/>
    </location>
    <ligand>
        <name>Zn(2+)</name>
        <dbReference type="ChEBI" id="CHEBI:29105"/>
        <label>2</label>
    </ligand>
</feature>
<feature type="binding site" evidence="1">
    <location>
        <position position="74"/>
    </location>
    <ligand>
        <name>Zn(2+)</name>
        <dbReference type="ChEBI" id="CHEBI:29105"/>
        <label>1</label>
    </ligand>
</feature>
<feature type="binding site" evidence="1">
    <location>
        <position position="74"/>
    </location>
    <ligand>
        <name>Zn(2+)</name>
        <dbReference type="ChEBI" id="CHEBI:29105"/>
        <label>3</label>
    </ligand>
</feature>
<feature type="binding site" evidence="1">
    <location>
        <position position="102"/>
    </location>
    <ligand>
        <name>Zn(2+)</name>
        <dbReference type="ChEBI" id="CHEBI:29105"/>
        <label>3</label>
    </ligand>
</feature>
<feature type="binding site" evidence="1">
    <location>
        <position position="132"/>
    </location>
    <ligand>
        <name>Zn(2+)</name>
        <dbReference type="ChEBI" id="CHEBI:29105"/>
        <label>3</label>
    </ligand>
</feature>
<feature type="binding site" evidence="1">
    <location>
        <position position="193"/>
    </location>
    <ligand>
        <name>Zn(2+)</name>
        <dbReference type="ChEBI" id="CHEBI:29105"/>
        <label>1</label>
    </ligand>
</feature>
<feature type="binding site" evidence="1">
    <location>
        <position position="195"/>
    </location>
    <ligand>
        <name>Zn(2+)</name>
        <dbReference type="ChEBI" id="CHEBI:29105"/>
        <label>2</label>
    </ligand>
</feature>
<sequence length="254" mass="27455">MQYQVDTHTHTVASSHAYSTIHDYIAVAKQKGIRLFANTDHGPAMADAPHFWHFVNLRVLPRMVDGVGILRGIEANIKNIDGEIDFFGDYLKQLDIVLAGFHEPVYPPSDKATHTEAMINAIKSGKVDIITHPGNPAYPIDIEAVARAAAEYGVALEINNSSFEVSRKGSEANCTAIAKAAKEFGTILVMGSDSHVAFSLGGFARAQAIIDEVAYPPSRLLNRSPSALLAFLAARGHETVADLIPLFSDDEPCC</sequence>
<comment type="cofactor">
    <cofactor evidence="1">
        <name>Zn(2+)</name>
        <dbReference type="ChEBI" id="CHEBI:29105"/>
    </cofactor>
    <text evidence="1">Binds 3 Zn(2+) ions per subunit.</text>
</comment>
<comment type="similarity">
    <text evidence="1">Belongs to the PHP family.</text>
</comment>
<accession>A9KVD6</accession>
<gene>
    <name type="ordered locus">Sbal195_1503</name>
</gene>
<evidence type="ECO:0000255" key="1">
    <source>
        <dbReference type="HAMAP-Rule" id="MF_01561"/>
    </source>
</evidence>
<reference key="1">
    <citation type="submission" date="2007-11" db="EMBL/GenBank/DDBJ databases">
        <title>Complete sequence of chromosome of Shewanella baltica OS195.</title>
        <authorList>
            <consortium name="US DOE Joint Genome Institute"/>
            <person name="Copeland A."/>
            <person name="Lucas S."/>
            <person name="Lapidus A."/>
            <person name="Barry K."/>
            <person name="Glavina del Rio T."/>
            <person name="Dalin E."/>
            <person name="Tice H."/>
            <person name="Pitluck S."/>
            <person name="Chain P."/>
            <person name="Malfatti S."/>
            <person name="Shin M."/>
            <person name="Vergez L."/>
            <person name="Schmutz J."/>
            <person name="Larimer F."/>
            <person name="Land M."/>
            <person name="Hauser L."/>
            <person name="Kyrpides N."/>
            <person name="Kim E."/>
            <person name="Brettar I."/>
            <person name="Rodrigues J."/>
            <person name="Konstantinidis K."/>
            <person name="Klappenbach J."/>
            <person name="Hofle M."/>
            <person name="Tiedje J."/>
            <person name="Richardson P."/>
        </authorList>
    </citation>
    <scope>NUCLEOTIDE SEQUENCE [LARGE SCALE GENOMIC DNA]</scope>
    <source>
        <strain>OS195</strain>
    </source>
</reference>
<organism>
    <name type="scientific">Shewanella baltica (strain OS195)</name>
    <dbReference type="NCBI Taxonomy" id="399599"/>
    <lineage>
        <taxon>Bacteria</taxon>
        <taxon>Pseudomonadati</taxon>
        <taxon>Pseudomonadota</taxon>
        <taxon>Gammaproteobacteria</taxon>
        <taxon>Alteromonadales</taxon>
        <taxon>Shewanellaceae</taxon>
        <taxon>Shewanella</taxon>
    </lineage>
</organism>
<proteinExistence type="inferred from homology"/>
<dbReference type="EC" id="3.1.3.-" evidence="1"/>
<dbReference type="EMBL" id="CP000891">
    <property type="protein sequence ID" value="ABX48676.1"/>
    <property type="molecule type" value="Genomic_DNA"/>
</dbReference>
<dbReference type="RefSeq" id="WP_006085262.1">
    <property type="nucleotide sequence ID" value="NC_009997.1"/>
</dbReference>
<dbReference type="SMR" id="A9KVD6"/>
<dbReference type="KEGG" id="sbn:Sbal195_1503"/>
<dbReference type="HOGENOM" id="CLU_061999_0_1_6"/>
<dbReference type="Proteomes" id="UP000000770">
    <property type="component" value="Chromosome"/>
</dbReference>
<dbReference type="GO" id="GO:0005829">
    <property type="term" value="C:cytosol"/>
    <property type="evidence" value="ECO:0007669"/>
    <property type="project" value="TreeGrafter"/>
</dbReference>
<dbReference type="GO" id="GO:0016791">
    <property type="term" value="F:phosphatase activity"/>
    <property type="evidence" value="ECO:0007669"/>
    <property type="project" value="UniProtKB-UniRule"/>
</dbReference>
<dbReference type="GO" id="GO:0008270">
    <property type="term" value="F:zinc ion binding"/>
    <property type="evidence" value="ECO:0007669"/>
    <property type="project" value="UniProtKB-UniRule"/>
</dbReference>
<dbReference type="GO" id="GO:0071978">
    <property type="term" value="P:bacterial-type flagellum-dependent swarming motility"/>
    <property type="evidence" value="ECO:0007669"/>
    <property type="project" value="TreeGrafter"/>
</dbReference>
<dbReference type="CDD" id="cd07437">
    <property type="entry name" value="PHP_HisPPase_Ycdx_like"/>
    <property type="match status" value="1"/>
</dbReference>
<dbReference type="FunFam" id="3.20.20.140:FF:000008">
    <property type="entry name" value="Probable phosphatase YcdX"/>
    <property type="match status" value="1"/>
</dbReference>
<dbReference type="Gene3D" id="3.20.20.140">
    <property type="entry name" value="Metal-dependent hydrolases"/>
    <property type="match status" value="1"/>
</dbReference>
<dbReference type="HAMAP" id="MF_01561">
    <property type="entry name" value="YcdX_phosphat"/>
    <property type="match status" value="1"/>
</dbReference>
<dbReference type="InterPro" id="IPR023710">
    <property type="entry name" value="Phosphatase_YcdX_put"/>
</dbReference>
<dbReference type="InterPro" id="IPR004013">
    <property type="entry name" value="PHP_dom"/>
</dbReference>
<dbReference type="InterPro" id="IPR050243">
    <property type="entry name" value="PHP_phosphatase"/>
</dbReference>
<dbReference type="InterPro" id="IPR003141">
    <property type="entry name" value="Pol/His_phosphatase_N"/>
</dbReference>
<dbReference type="InterPro" id="IPR016195">
    <property type="entry name" value="Pol/histidinol_Pase-like"/>
</dbReference>
<dbReference type="NCBIfam" id="NF006702">
    <property type="entry name" value="PRK09248.1"/>
    <property type="match status" value="1"/>
</dbReference>
<dbReference type="PANTHER" id="PTHR36928">
    <property type="entry name" value="PHOSPHATASE YCDX-RELATED"/>
    <property type="match status" value="1"/>
</dbReference>
<dbReference type="PANTHER" id="PTHR36928:SF1">
    <property type="entry name" value="PHOSPHATASE YCDX-RELATED"/>
    <property type="match status" value="1"/>
</dbReference>
<dbReference type="Pfam" id="PF02811">
    <property type="entry name" value="PHP"/>
    <property type="match status" value="1"/>
</dbReference>
<dbReference type="SMART" id="SM00481">
    <property type="entry name" value="POLIIIAc"/>
    <property type="match status" value="1"/>
</dbReference>
<dbReference type="SUPFAM" id="SSF89550">
    <property type="entry name" value="PHP domain-like"/>
    <property type="match status" value="1"/>
</dbReference>